<name>PG61_MYCTU</name>
<proteinExistence type="evidence at protein level"/>
<keyword id="KW-0106">Calcium</keyword>
<keyword id="KW-0134">Cell wall</keyword>
<keyword id="KW-1185">Reference proteome</keyword>
<keyword id="KW-0964">Secreted</keyword>
<gene>
    <name evidence="3" type="primary">PE_PGRS61</name>
    <name evidence="3" type="ordered locus">Rv3653</name>
</gene>
<evidence type="ECO:0000269" key="1">
    <source>
    </source>
</evidence>
<evidence type="ECO:0000305" key="2"/>
<evidence type="ECO:0000312" key="3">
    <source>
        <dbReference type="EMBL" id="CCP46476.1"/>
    </source>
</evidence>
<sequence length="195" mass="15819">MLNAPTQALLGRPLVGNGANGAPGTGANGGDGGILFGSGGAGGSGAAGMAGGNGGAAGLFGNGGAGGAGGSATAGAAGAGGNGGAGGLLFGTAGAGGNGGLSLGLGVAGGAGGAGGSGGSDTAGHGGTGGAGGLLFGAGEDGTTPGGNGGAGGVAGLFGDGGNGGNAGVGTPAGNVGAGGTGGLLLGQDGMTGLT</sequence>
<accession>Q6MWV0</accession>
<accession>V5QQT3</accession>
<protein>
    <recommendedName>
        <fullName evidence="2">PE-PGRS family protein PE_PGRS61</fullName>
    </recommendedName>
</protein>
<dbReference type="EMBL" id="AL123456">
    <property type="protein sequence ID" value="CCP46476.1"/>
    <property type="molecule type" value="Genomic_DNA"/>
</dbReference>
<dbReference type="RefSeq" id="WP_003907101.1">
    <property type="nucleotide sequence ID" value="NZ_KK339374.1"/>
</dbReference>
<dbReference type="RefSeq" id="YP_178002.1">
    <property type="nucleotide sequence ID" value="NC_000962.3"/>
</dbReference>
<dbReference type="STRING" id="83332.Rv3653"/>
<dbReference type="PaxDb" id="83332-Rv3653"/>
<dbReference type="DNASU" id="886259"/>
<dbReference type="GeneID" id="886259"/>
<dbReference type="KEGG" id="mtu:Rv3653"/>
<dbReference type="KEGG" id="mtv:RVBD_3653"/>
<dbReference type="PATRIC" id="fig|83332.111.peg.4062"/>
<dbReference type="TubercuList" id="Rv3653"/>
<dbReference type="eggNOG" id="COG0657">
    <property type="taxonomic scope" value="Bacteria"/>
</dbReference>
<dbReference type="InParanoid" id="Q6MWV0"/>
<dbReference type="Proteomes" id="UP000001584">
    <property type="component" value="Chromosome"/>
</dbReference>
<dbReference type="GO" id="GO:0009986">
    <property type="term" value="C:cell surface"/>
    <property type="evidence" value="ECO:0007669"/>
    <property type="project" value="UniProtKB-SubCell"/>
</dbReference>
<dbReference type="GO" id="GO:0005576">
    <property type="term" value="C:extracellular region"/>
    <property type="evidence" value="ECO:0007669"/>
    <property type="project" value="UniProtKB-KW"/>
</dbReference>
<dbReference type="InterPro" id="IPR048996">
    <property type="entry name" value="PGRS_rpt"/>
</dbReference>
<dbReference type="Pfam" id="PF21526">
    <property type="entry name" value="PGRS"/>
    <property type="match status" value="1"/>
</dbReference>
<reference key="1">
    <citation type="journal article" date="1998" name="Nature">
        <title>Deciphering the biology of Mycobacterium tuberculosis from the complete genome sequence.</title>
        <authorList>
            <person name="Cole S.T."/>
            <person name="Brosch R."/>
            <person name="Parkhill J."/>
            <person name="Garnier T."/>
            <person name="Churcher C.M."/>
            <person name="Harris D.E."/>
            <person name="Gordon S.V."/>
            <person name="Eiglmeier K."/>
            <person name="Gas S."/>
            <person name="Barry C.E. III"/>
            <person name="Tekaia F."/>
            <person name="Badcock K."/>
            <person name="Basham D."/>
            <person name="Brown D."/>
            <person name="Chillingworth T."/>
            <person name="Connor R."/>
            <person name="Davies R.M."/>
            <person name="Devlin K."/>
            <person name="Feltwell T."/>
            <person name="Gentles S."/>
            <person name="Hamlin N."/>
            <person name="Holroyd S."/>
            <person name="Hornsby T."/>
            <person name="Jagels K."/>
            <person name="Krogh A."/>
            <person name="McLean J."/>
            <person name="Moule S."/>
            <person name="Murphy L.D."/>
            <person name="Oliver S."/>
            <person name="Osborne J."/>
            <person name="Quail M.A."/>
            <person name="Rajandream M.A."/>
            <person name="Rogers J."/>
            <person name="Rutter S."/>
            <person name="Seeger K."/>
            <person name="Skelton S."/>
            <person name="Squares S."/>
            <person name="Squares R."/>
            <person name="Sulston J.E."/>
            <person name="Taylor K."/>
            <person name="Whitehead S."/>
            <person name="Barrell B.G."/>
        </authorList>
    </citation>
    <scope>NUCLEOTIDE SEQUENCE [LARGE SCALE GENOMIC DNA]</scope>
    <source>
        <strain>ATCC 25618 / H37Rv</strain>
    </source>
</reference>
<reference key="2">
    <citation type="journal article" date="2016" name="Biochemistry">
        <title>The PE_PGRS proteins of Mycobacterium tuberculosis are Ca(2+) binding mediators of host-pathogen interaction.</title>
        <authorList>
            <person name="Yeruva V.C."/>
            <person name="Kulkarni A."/>
            <person name="Khandelwal R."/>
            <person name="Sharma Y."/>
            <person name="Raghunand T.R."/>
        </authorList>
    </citation>
    <scope>FUNCTION</scope>
    <scope>ACTIVITY REGULATION</scope>
    <scope>INTERACTION WITH TLR2</scope>
    <scope>SUBCELLULAR LOCATION</scope>
    <scope>MUTAGENESIS OF ASN-166 AND GLY-168</scope>
</reference>
<feature type="chain" id="PRO_0000438250" description="PE-PGRS family protein PE_PGRS61">
    <location>
        <begin position="1"/>
        <end position="195"/>
    </location>
</feature>
<feature type="mutagenesis site" description="Decreases Ca(2+) binding affinity." evidence="1">
    <original>N</original>
    <variation>A</variation>
    <location>
        <position position="166"/>
    </location>
</feature>
<feature type="mutagenesis site" description="Decreases Ca(2+) binding affinity." evidence="1">
    <original>G</original>
    <variation>S</variation>
    <location>
        <position position="168"/>
    </location>
</feature>
<organism>
    <name type="scientific">Mycobacterium tuberculosis (strain ATCC 25618 / H37Rv)</name>
    <dbReference type="NCBI Taxonomy" id="83332"/>
    <lineage>
        <taxon>Bacteria</taxon>
        <taxon>Bacillati</taxon>
        <taxon>Actinomycetota</taxon>
        <taxon>Actinomycetes</taxon>
        <taxon>Mycobacteriales</taxon>
        <taxon>Mycobacteriaceae</taxon>
        <taxon>Mycobacterium</taxon>
        <taxon>Mycobacterium tuberculosis complex</taxon>
    </lineage>
</organism>
<comment type="function">
    <text evidence="1">Mediates Ca(2+)-dependent up-regulation of the anti-inflammatory cytokine IL-10.</text>
</comment>
<comment type="activity regulation">
    <text evidence="1">Binding of Ca(2+) to PE_PGRS61 induces conformational changes and increases affinity for TLR2.</text>
</comment>
<comment type="subunit">
    <text evidence="1">Interacts with human TLR2.</text>
</comment>
<comment type="subcellular location">
    <subcellularLocation>
        <location evidence="1">Secreted</location>
        <location evidence="1">Cell wall</location>
    </subcellularLocation>
    <subcellularLocation>
        <location evidence="1">Cell surface</location>
    </subcellularLocation>
</comment>
<comment type="similarity">
    <text evidence="2">Belongs to the mycobacterial PE family. PGRS subfamily.</text>
</comment>